<organism>
    <name type="scientific">Micrurus frontalis</name>
    <name type="common">Coral snake</name>
    <dbReference type="NCBI Taxonomy" id="129461"/>
    <lineage>
        <taxon>Eukaryota</taxon>
        <taxon>Metazoa</taxon>
        <taxon>Chordata</taxon>
        <taxon>Craniata</taxon>
        <taxon>Vertebrata</taxon>
        <taxon>Euteleostomi</taxon>
        <taxon>Lepidosauria</taxon>
        <taxon>Squamata</taxon>
        <taxon>Bifurcata</taxon>
        <taxon>Unidentata</taxon>
        <taxon>Episquamata</taxon>
        <taxon>Toxicofera</taxon>
        <taxon>Serpentes</taxon>
        <taxon>Colubroidea</taxon>
        <taxon>Elapidae</taxon>
        <taxon>Elapinae</taxon>
        <taxon>Micrurus</taxon>
    </lineage>
</organism>
<sequence>LICYNDHGYTGKTTETCENGETTCYEKSR</sequence>
<protein>
    <recommendedName>
        <fullName evidence="4">Frontoxin VI</fullName>
        <shortName evidence="4">FTx VI</shortName>
    </recommendedName>
</protein>
<reference key="1">
    <citation type="journal article" date="2010" name="Toxicon">
        <title>Frontoxins, three-finger toxins from Micrurus frontalis venom, decrease miniature endplate potential amplitude at frog neuromuscular junction.</title>
        <authorList>
            <person name="Moreira K.G."/>
            <person name="Prates M.V."/>
            <person name="Andrade F.A."/>
            <person name="Silva L.P."/>
            <person name="Beirao P.S."/>
            <person name="Kushmerick C."/>
            <person name="Naves L.A."/>
            <person name="Bloch C. Jr."/>
        </authorList>
    </citation>
    <scope>PROTEIN SEQUENCE</scope>
    <scope>SUBCELLULAR LOCATION</scope>
    <scope>MASS SPECTROMETRY</scope>
    <source>
        <tissue>Venom</tissue>
    </source>
</reference>
<feature type="chain" id="PRO_0000394464" description="Frontoxin VI" evidence="3">
    <location>
        <begin position="1"/>
        <end position="29" status="greater than"/>
    </location>
</feature>
<feature type="disulfide bond" evidence="2">
    <location>
        <begin position="3"/>
        <end position="24"/>
    </location>
</feature>
<feature type="disulfide bond" evidence="2">
    <location>
        <begin position="17"/>
        <end status="unknown"/>
    </location>
</feature>
<feature type="non-terminal residue" evidence="4">
    <location>
        <position position="29"/>
    </location>
</feature>
<accession>P86425</accession>
<comment type="function">
    <text evidence="1">Binds to muscle nicotinic acetylcholine receptor (nAChR) and inhibit acetylcholine from binding to the receptor, thereby impairing neuromuscular transmission.</text>
</comment>
<comment type="subcellular location">
    <subcellularLocation>
        <location evidence="3">Secreted</location>
    </subcellularLocation>
</comment>
<comment type="tissue specificity">
    <text evidence="5">Expressed by the venom gland.</text>
</comment>
<comment type="mass spectrometry"/>
<comment type="similarity">
    <text evidence="5">Belongs to the three-finger toxin family. Short-chain subfamily. Type I alpha-neurotoxin sub-subfamily.</text>
</comment>
<name>3S16_MICFR</name>
<dbReference type="SMR" id="P86425"/>
<dbReference type="GO" id="GO:0005576">
    <property type="term" value="C:extracellular region"/>
    <property type="evidence" value="ECO:0007669"/>
    <property type="project" value="UniProtKB-SubCell"/>
</dbReference>
<dbReference type="GO" id="GO:0030550">
    <property type="term" value="F:acetylcholine receptor inhibitor activity"/>
    <property type="evidence" value="ECO:0007669"/>
    <property type="project" value="UniProtKB-KW"/>
</dbReference>
<dbReference type="GO" id="GO:0099106">
    <property type="term" value="F:ion channel regulator activity"/>
    <property type="evidence" value="ECO:0007669"/>
    <property type="project" value="UniProtKB-KW"/>
</dbReference>
<dbReference type="GO" id="GO:0090729">
    <property type="term" value="F:toxin activity"/>
    <property type="evidence" value="ECO:0007669"/>
    <property type="project" value="UniProtKB-KW"/>
</dbReference>
<dbReference type="Gene3D" id="2.10.60.10">
    <property type="entry name" value="CD59"/>
    <property type="match status" value="1"/>
</dbReference>
<dbReference type="InterPro" id="IPR045860">
    <property type="entry name" value="Snake_toxin-like_sf"/>
</dbReference>
<dbReference type="SUPFAM" id="SSF57302">
    <property type="entry name" value="Snake toxin-like"/>
    <property type="match status" value="1"/>
</dbReference>
<evidence type="ECO:0000250" key="1">
    <source>
        <dbReference type="UniProtKB" id="F5CPD6"/>
    </source>
</evidence>
<evidence type="ECO:0000250" key="2">
    <source>
        <dbReference type="UniProtKB" id="P60775"/>
    </source>
</evidence>
<evidence type="ECO:0000269" key="3">
    <source>
    </source>
</evidence>
<evidence type="ECO:0000303" key="4">
    <source>
    </source>
</evidence>
<evidence type="ECO:0000305" key="5"/>
<keyword id="KW-0008">Acetylcholine receptor inhibiting toxin</keyword>
<keyword id="KW-0903">Direct protein sequencing</keyword>
<keyword id="KW-1015">Disulfide bond</keyword>
<keyword id="KW-0872">Ion channel impairing toxin</keyword>
<keyword id="KW-0528">Neurotoxin</keyword>
<keyword id="KW-0629">Postsynaptic neurotoxin</keyword>
<keyword id="KW-0964">Secreted</keyword>
<keyword id="KW-0800">Toxin</keyword>
<proteinExistence type="evidence at protein level"/>